<keyword id="KW-0963">Cytoplasm</keyword>
<keyword id="KW-0570">Pentose shunt</keyword>
<keyword id="KW-0704">Schiff base</keyword>
<keyword id="KW-0808">Transferase</keyword>
<accession>Q04T59</accession>
<dbReference type="EC" id="2.2.1.2" evidence="1"/>
<dbReference type="EMBL" id="CP000350">
    <property type="protein sequence ID" value="ABJ75911.1"/>
    <property type="molecule type" value="Genomic_DNA"/>
</dbReference>
<dbReference type="SMR" id="Q04T59"/>
<dbReference type="KEGG" id="lbj:LBJ_1326"/>
<dbReference type="HOGENOM" id="CLU_079764_0_0_12"/>
<dbReference type="UniPathway" id="UPA00115">
    <property type="reaction ID" value="UER00414"/>
</dbReference>
<dbReference type="Proteomes" id="UP000000656">
    <property type="component" value="Chromosome 1"/>
</dbReference>
<dbReference type="GO" id="GO:0005737">
    <property type="term" value="C:cytoplasm"/>
    <property type="evidence" value="ECO:0007669"/>
    <property type="project" value="UniProtKB-SubCell"/>
</dbReference>
<dbReference type="GO" id="GO:0016832">
    <property type="term" value="F:aldehyde-lyase activity"/>
    <property type="evidence" value="ECO:0007669"/>
    <property type="project" value="InterPro"/>
</dbReference>
<dbReference type="GO" id="GO:0004801">
    <property type="term" value="F:transaldolase activity"/>
    <property type="evidence" value="ECO:0007669"/>
    <property type="project" value="UniProtKB-UniRule"/>
</dbReference>
<dbReference type="GO" id="GO:0005975">
    <property type="term" value="P:carbohydrate metabolic process"/>
    <property type="evidence" value="ECO:0007669"/>
    <property type="project" value="InterPro"/>
</dbReference>
<dbReference type="GO" id="GO:0006098">
    <property type="term" value="P:pentose-phosphate shunt"/>
    <property type="evidence" value="ECO:0007669"/>
    <property type="project" value="UniProtKB-UniRule"/>
</dbReference>
<dbReference type="CDD" id="cd00956">
    <property type="entry name" value="Transaldolase_FSA"/>
    <property type="match status" value="1"/>
</dbReference>
<dbReference type="FunFam" id="3.20.20.70:FF:000018">
    <property type="entry name" value="Probable transaldolase"/>
    <property type="match status" value="1"/>
</dbReference>
<dbReference type="Gene3D" id="3.20.20.70">
    <property type="entry name" value="Aldolase class I"/>
    <property type="match status" value="1"/>
</dbReference>
<dbReference type="HAMAP" id="MF_00494">
    <property type="entry name" value="Transaldolase_3b"/>
    <property type="match status" value="1"/>
</dbReference>
<dbReference type="InterPro" id="IPR013785">
    <property type="entry name" value="Aldolase_TIM"/>
</dbReference>
<dbReference type="InterPro" id="IPR001585">
    <property type="entry name" value="TAL/FSA"/>
</dbReference>
<dbReference type="InterPro" id="IPR022999">
    <property type="entry name" value="Transaldolase_3B"/>
</dbReference>
<dbReference type="InterPro" id="IPR004731">
    <property type="entry name" value="Transaldolase_3B/F6P_aldolase"/>
</dbReference>
<dbReference type="InterPro" id="IPR018225">
    <property type="entry name" value="Transaldolase_AS"/>
</dbReference>
<dbReference type="InterPro" id="IPR033919">
    <property type="entry name" value="TSA/FSA_arc/bac"/>
</dbReference>
<dbReference type="NCBIfam" id="TIGR00875">
    <property type="entry name" value="fsa_talC_mipB"/>
    <property type="match status" value="1"/>
</dbReference>
<dbReference type="PANTHER" id="PTHR10683:SF40">
    <property type="entry name" value="FRUCTOSE-6-PHOSPHATE ALDOLASE 1-RELATED"/>
    <property type="match status" value="1"/>
</dbReference>
<dbReference type="PANTHER" id="PTHR10683">
    <property type="entry name" value="TRANSALDOLASE"/>
    <property type="match status" value="1"/>
</dbReference>
<dbReference type="Pfam" id="PF00923">
    <property type="entry name" value="TAL_FSA"/>
    <property type="match status" value="1"/>
</dbReference>
<dbReference type="SUPFAM" id="SSF51569">
    <property type="entry name" value="Aldolase"/>
    <property type="match status" value="1"/>
</dbReference>
<dbReference type="PROSITE" id="PS01054">
    <property type="entry name" value="TRANSALDOLASE_1"/>
    <property type="match status" value="1"/>
</dbReference>
<proteinExistence type="inferred from homology"/>
<feature type="chain" id="PRO_1000126325" description="Probable transaldolase">
    <location>
        <begin position="1"/>
        <end position="214"/>
    </location>
</feature>
<feature type="active site" description="Schiff-base intermediate with substrate" evidence="1">
    <location>
        <position position="83"/>
    </location>
</feature>
<reference key="1">
    <citation type="journal article" date="2006" name="Proc. Natl. Acad. Sci. U.S.A.">
        <title>Genome reduction in Leptospira borgpetersenii reflects limited transmission potential.</title>
        <authorList>
            <person name="Bulach D.M."/>
            <person name="Zuerner R.L."/>
            <person name="Wilson P."/>
            <person name="Seemann T."/>
            <person name="McGrath A."/>
            <person name="Cullen P.A."/>
            <person name="Davis J."/>
            <person name="Johnson M."/>
            <person name="Kuczek E."/>
            <person name="Alt D.P."/>
            <person name="Peterson-Burch B."/>
            <person name="Coppel R.L."/>
            <person name="Rood J.I."/>
            <person name="Davies J.K."/>
            <person name="Adler B."/>
        </authorList>
    </citation>
    <scope>NUCLEOTIDE SEQUENCE [LARGE SCALE GENOMIC DNA]</scope>
    <source>
        <strain>JB197</strain>
    </source>
</reference>
<protein>
    <recommendedName>
        <fullName evidence="1">Probable transaldolase</fullName>
        <ecNumber evidence="1">2.2.1.2</ecNumber>
    </recommendedName>
</protein>
<gene>
    <name evidence="1" type="primary">tal</name>
    <name type="ordered locus">LBJ_1326</name>
</gene>
<name>TAL_LEPBJ</name>
<comment type="function">
    <text evidence="1">Transaldolase is important for the balance of metabolites in the pentose-phosphate pathway.</text>
</comment>
<comment type="catalytic activity">
    <reaction evidence="1">
        <text>D-sedoheptulose 7-phosphate + D-glyceraldehyde 3-phosphate = D-erythrose 4-phosphate + beta-D-fructose 6-phosphate</text>
        <dbReference type="Rhea" id="RHEA:17053"/>
        <dbReference type="ChEBI" id="CHEBI:16897"/>
        <dbReference type="ChEBI" id="CHEBI:57483"/>
        <dbReference type="ChEBI" id="CHEBI:57634"/>
        <dbReference type="ChEBI" id="CHEBI:59776"/>
        <dbReference type="EC" id="2.2.1.2"/>
    </reaction>
</comment>
<comment type="pathway">
    <text evidence="1">Carbohydrate degradation; pentose phosphate pathway; D-glyceraldehyde 3-phosphate and beta-D-fructose 6-phosphate from D-ribose 5-phosphate and D-xylulose 5-phosphate (non-oxidative stage): step 2/3.</text>
</comment>
<comment type="subcellular location">
    <subcellularLocation>
        <location evidence="1">Cytoplasm</location>
    </subcellularLocation>
</comment>
<comment type="similarity">
    <text evidence="1">Belongs to the transaldolase family. Type 3B subfamily.</text>
</comment>
<sequence length="214" mass="23599">MELYLDTANIDEIKEIASYGLVDGVTTNPSIIAKSGRNFREVIKEICSIVSGPVSAEVLSTKFDGMMKEALELVEIAENVVIKVPLIPEGLKTVVELTKRNIPTNVTLCFSSSQALLAAKAGATYISPFIGRVDDTSWDGMELISEIREIYDNYGYDTRILAASIRGPMHLKESALRGADCATMPHSAFLQLFKHPLTDIGLEKFLEDSKKLKW</sequence>
<evidence type="ECO:0000255" key="1">
    <source>
        <dbReference type="HAMAP-Rule" id="MF_00494"/>
    </source>
</evidence>
<organism>
    <name type="scientific">Leptospira borgpetersenii serovar Hardjo-bovis (strain JB197)</name>
    <dbReference type="NCBI Taxonomy" id="355277"/>
    <lineage>
        <taxon>Bacteria</taxon>
        <taxon>Pseudomonadati</taxon>
        <taxon>Spirochaetota</taxon>
        <taxon>Spirochaetia</taxon>
        <taxon>Leptospirales</taxon>
        <taxon>Leptospiraceae</taxon>
        <taxon>Leptospira</taxon>
    </lineage>
</organism>